<organism>
    <name type="scientific">Hyacinthus orientalis</name>
    <name type="common">Common hyacinth</name>
    <dbReference type="NCBI Taxonomy" id="82025"/>
    <lineage>
        <taxon>Eukaryota</taxon>
        <taxon>Viridiplantae</taxon>
        <taxon>Streptophyta</taxon>
        <taxon>Embryophyta</taxon>
        <taxon>Tracheophyta</taxon>
        <taxon>Spermatophyta</taxon>
        <taxon>Magnoliopsida</taxon>
        <taxon>Liliopsida</taxon>
        <taxon>Asparagales</taxon>
        <taxon>Hyacinthaceae</taxon>
        <taxon>Hyacinthoideae</taxon>
        <taxon>Hyacintheae</taxon>
        <taxon>Hyacinthus</taxon>
    </lineage>
</organism>
<name>IBBB1_HYAOR</name>
<proteinExistence type="evidence at protein level"/>
<feature type="chain" id="PRO_0000452979" description="Bowman-Birk type proteinase inhibitor B1">
    <location>
        <begin position="1"/>
        <end position="55"/>
    </location>
</feature>
<feature type="site" description="Reactive bond for trypsin" evidence="1">
    <location>
        <begin position="14"/>
        <end position="15"/>
    </location>
</feature>
<feature type="disulfide bond" evidence="1">
    <location>
        <begin position="6"/>
        <end position="53"/>
    </location>
</feature>
<feature type="disulfide bond" evidence="1">
    <location>
        <begin position="12"/>
        <end position="17"/>
    </location>
</feature>
<feature type="disulfide bond" evidence="1">
    <location>
        <begin position="26"/>
        <end position="33"/>
    </location>
</feature>
<feature type="disulfide bond" evidence="1">
    <location>
        <begin position="30"/>
        <end position="45"/>
    </location>
</feature>
<keyword id="KW-0903">Direct protein sequencing</keyword>
<keyword id="KW-1015">Disulfide bond</keyword>
<keyword id="KW-0646">Protease inhibitor</keyword>
<keyword id="KW-0722">Serine protease inhibitor</keyword>
<sequence>GQQPLCNDCFACARSLCICGDLVPQCHEGCQQCEKVDTGKPLYQCRSFEDYQCAN</sequence>
<dbReference type="SMR" id="C0HLS9"/>
<dbReference type="GO" id="GO:0005576">
    <property type="term" value="C:extracellular region"/>
    <property type="evidence" value="ECO:0007669"/>
    <property type="project" value="InterPro"/>
</dbReference>
<dbReference type="GO" id="GO:0004867">
    <property type="term" value="F:serine-type endopeptidase inhibitor activity"/>
    <property type="evidence" value="ECO:0000314"/>
    <property type="project" value="UniProtKB"/>
</dbReference>
<dbReference type="GO" id="GO:0010951">
    <property type="term" value="P:negative regulation of endopeptidase activity"/>
    <property type="evidence" value="ECO:0000314"/>
    <property type="project" value="UniProtKB"/>
</dbReference>
<dbReference type="Gene3D" id="2.10.69.10">
    <property type="entry name" value="Cysteine Protease (Bromelain) Inhibitor, subunit H"/>
    <property type="match status" value="1"/>
</dbReference>
<dbReference type="InterPro" id="IPR035995">
    <property type="entry name" value="Bowman-Birk_prot_inh"/>
</dbReference>
<evidence type="ECO:0000250" key="1">
    <source>
        <dbReference type="UniProtKB" id="P80321"/>
    </source>
</evidence>
<evidence type="ECO:0000269" key="2">
    <source>
    </source>
</evidence>
<evidence type="ECO:0000303" key="3">
    <source>
    </source>
</evidence>
<evidence type="ECO:0000305" key="4"/>
<reference key="1">
    <citation type="journal article" date="2021" name="Biochem. J.">
        <title>Isolation and functional diversity of Bowman-Birk type serine proteinase inhibitors from Hyacinthus orientalis.</title>
        <authorList>
            <person name="Aoki-Shioi N."/>
            <person name="Terada S."/>
            <person name="Hellinger R."/>
            <person name="Furuta Y."/>
            <person name="Gruber C.W."/>
        </authorList>
    </citation>
    <scope>PROTEIN SEQUENCE</scope>
    <scope>FUNCTION</scope>
    <scope>TISSUE SPECIFICITY</scope>
    <source>
        <tissue evidence="3">Bulb</tissue>
    </source>
</reference>
<accession>C0HLS9</accession>
<comment type="function">
    <text evidence="2">Serine protease inhibitor (PubMed:33666645). Weakly inhibits trypsin (Ki = 167 nM) (PubMed:33666645). Does not inhibit bacterial subtilisin or mamallian chymotrypsin (PubMed:33666645).</text>
</comment>
<comment type="tissue specificity">
    <text evidence="2">Expressed in bulb (at protein level).</text>
</comment>
<comment type="similarity">
    <text evidence="4">Belongs to the Bowman-Birk serine protease inhibitor family.</text>
</comment>
<protein>
    <recommendedName>
        <fullName evidence="3">Bowman-Birk type proteinase inhibitor B1</fullName>
        <shortName evidence="3">HOSPI-B1</shortName>
    </recommendedName>
</protein>